<name>SKI_CHICK</name>
<reference key="1">
    <citation type="journal article" date="1989" name="Mol. Cell. Biol.">
        <title>Isolation and characterization of three distinct cDNAs for the chicken c-ski gene.</title>
        <authorList>
            <person name="Sutrave P."/>
            <person name="Hughes S.H."/>
        </authorList>
    </citation>
    <scope>NUCLEOTIDE SEQUENCE [GENOMIC DNA]</scope>
</reference>
<keyword id="KW-0175">Coiled coil</keyword>
<keyword id="KW-0539">Nucleus</keyword>
<keyword id="KW-0656">Proto-oncogene</keyword>
<keyword id="KW-1185">Reference proteome</keyword>
<keyword id="KW-0677">Repeat</keyword>
<evidence type="ECO:0000250" key="1"/>
<evidence type="ECO:0000255" key="2"/>
<evidence type="ECO:0000256" key="3">
    <source>
        <dbReference type="SAM" id="MobiDB-lite"/>
    </source>
</evidence>
<evidence type="ECO:0000305" key="4"/>
<accession>P49140</accession>
<protein>
    <recommendedName>
        <fullName>Ski oncogene</fullName>
    </recommendedName>
    <alternativeName>
        <fullName>Proto-oncogene c-Ski</fullName>
    </alternativeName>
</protein>
<comment type="function">
    <text evidence="1">May play a role in terminal differentiation of skeletal muscle cells but not in the determination of cells to the myogenic lineage. May function in TGF-beta signaling (By similarity).</text>
</comment>
<comment type="interaction">
    <interactant intactId="EBI-6392357">
        <id>P49140</id>
    </interactant>
    <interactant intactId="EBI-632715">
        <id>Q13573</id>
        <label>SNW1</label>
    </interactant>
    <organismsDiffer>true</organismsDiffer>
    <experiments>4</experiments>
</comment>
<comment type="subcellular location">
    <subcellularLocation>
        <location>Nucleus</location>
    </subcellularLocation>
</comment>
<comment type="similarity">
    <text evidence="4">Belongs to the SKI family.</text>
</comment>
<gene>
    <name type="primary">SKI</name>
</gene>
<feature type="chain" id="PRO_0000129384" description="Ski oncogene">
    <location>
        <begin position="1"/>
        <end position="750"/>
    </location>
</feature>
<feature type="region of interest" description="Disordered" evidence="3">
    <location>
        <begin position="329"/>
        <end position="386"/>
    </location>
</feature>
<feature type="region of interest" description="Disordered" evidence="3">
    <location>
        <begin position="447"/>
        <end position="542"/>
    </location>
</feature>
<feature type="region of interest" description="Disordered" evidence="3">
    <location>
        <begin position="727"/>
        <end position="750"/>
    </location>
</feature>
<feature type="coiled-coil region" evidence="2">
    <location>
        <begin position="558"/>
        <end position="732"/>
    </location>
</feature>
<feature type="compositionally biased region" description="Low complexity" evidence="3">
    <location>
        <begin position="371"/>
        <end position="384"/>
    </location>
</feature>
<feature type="compositionally biased region" description="Polar residues" evidence="3">
    <location>
        <begin position="458"/>
        <end position="469"/>
    </location>
</feature>
<feature type="compositionally biased region" description="Low complexity" evidence="3">
    <location>
        <begin position="479"/>
        <end position="492"/>
    </location>
</feature>
<feature type="compositionally biased region" description="Acidic residues" evidence="3">
    <location>
        <begin position="493"/>
        <end position="504"/>
    </location>
</feature>
<feature type="compositionally biased region" description="Low complexity" evidence="3">
    <location>
        <begin position="512"/>
        <end position="528"/>
    </location>
</feature>
<feature type="compositionally biased region" description="Low complexity" evidence="3">
    <location>
        <begin position="735"/>
        <end position="750"/>
    </location>
</feature>
<sequence length="750" mass="84282">METVSRSSFQPHPGLQKTLEQFHLSSMSSLGGPAAFSARWAQEMYKKDNGKDPAEPVLHLPPIQPPPVMPGPFFMPSDRSTERCETILEGETISCFVVGGEKRLCLPQILNSVLRDFSLQQINSVCDELHIYCSRCTADQLEILKVMGILPFSAPSCGLITKTDAERLCNALLYGGTYPPHCKKEFSSTIELELTEKSFKVYHECFGKCKGLLVPELYSNPSAACIQCLDCRLMYPPHKFVVHSHKSLENRTCHWGFDSANWRSYILLSQDYTGKEEKARLGQLLDEMKEKFDYNNKYKRKAPRNRESPRVQLRRTKMFKTMLWDPAGGSAVLQRQPDGNEVPSDPPASKKTKIDDSASQSPASTEKEKQSSWLRSLSSSSNKSIGCVHPRQRLSAFRPWSPAVSANEKELSTHLPALIRDSSFYSYKSFENAVAPNVALAPPAQQKVVSNPPCATVVSRSSEPPSSAAQPRKRKHAAETPAVPEPVATVTAPEEDKESEAEIEVETREEFTSSLSSLSSPSFTSSSSAKDMSSPGMQAPVPVNSSYEVAAHSDSHSSGLEAELEHLRQALDSGLDTKEAKEKFLHEVVKMRVKQEEKLNAALQAKRSLHQELEFLRVAKKEKLREATEAKRNLRKEIERLRAENEKKMKEANESRIRLKRELEQARQIRVCDKGCEAGRLRAKYSAQIEDLQVKLQHAEADREQLRADLMHEREAREHLEKVVKELQEQLWPKSSSQSSSENTTSNMEN</sequence>
<proteinExistence type="evidence at protein level"/>
<organism>
    <name type="scientific">Gallus gallus</name>
    <name type="common">Chicken</name>
    <dbReference type="NCBI Taxonomy" id="9031"/>
    <lineage>
        <taxon>Eukaryota</taxon>
        <taxon>Metazoa</taxon>
        <taxon>Chordata</taxon>
        <taxon>Craniata</taxon>
        <taxon>Vertebrata</taxon>
        <taxon>Euteleostomi</taxon>
        <taxon>Archelosauria</taxon>
        <taxon>Archosauria</taxon>
        <taxon>Dinosauria</taxon>
        <taxon>Saurischia</taxon>
        <taxon>Theropoda</taxon>
        <taxon>Coelurosauria</taxon>
        <taxon>Aves</taxon>
        <taxon>Neognathae</taxon>
        <taxon>Galloanserae</taxon>
        <taxon>Galliformes</taxon>
        <taxon>Phasianidae</taxon>
        <taxon>Phasianinae</taxon>
        <taxon>Gallus</taxon>
    </lineage>
</organism>
<dbReference type="EMBL" id="M28517">
    <property type="protein sequence ID" value="AAA48730.1"/>
    <property type="molecule type" value="Genomic_DNA"/>
</dbReference>
<dbReference type="PIR" id="A32575">
    <property type="entry name" value="A32575"/>
</dbReference>
<dbReference type="PIR" id="B32575">
    <property type="entry name" value="B32575"/>
</dbReference>
<dbReference type="RefSeq" id="NP_001034407.1">
    <property type="nucleotide sequence ID" value="NM_001039318.1"/>
</dbReference>
<dbReference type="SMR" id="P49140"/>
<dbReference type="BioGRID" id="687293">
    <property type="interactions" value="2"/>
</dbReference>
<dbReference type="FunCoup" id="P49140">
    <property type="interactions" value="1012"/>
</dbReference>
<dbReference type="IntAct" id="P49140">
    <property type="interactions" value="1"/>
</dbReference>
<dbReference type="STRING" id="9031.ENSGALP00000001862"/>
<dbReference type="PaxDb" id="9031-ENSGALP00000001862"/>
<dbReference type="GeneID" id="428181"/>
<dbReference type="KEGG" id="gga:428181"/>
<dbReference type="CTD" id="6497"/>
<dbReference type="VEuPathDB" id="HostDB:geneid_428181"/>
<dbReference type="eggNOG" id="ENOG502QTF6">
    <property type="taxonomic scope" value="Eukaryota"/>
</dbReference>
<dbReference type="InParanoid" id="P49140"/>
<dbReference type="OrthoDB" id="3938623at2759"/>
<dbReference type="PhylomeDB" id="P49140"/>
<dbReference type="PRO" id="PR:P49140"/>
<dbReference type="Proteomes" id="UP000000539">
    <property type="component" value="Unassembled WGS sequence"/>
</dbReference>
<dbReference type="GO" id="GO:0005737">
    <property type="term" value="C:cytoplasm"/>
    <property type="evidence" value="ECO:0000318"/>
    <property type="project" value="GO_Central"/>
</dbReference>
<dbReference type="GO" id="GO:0005634">
    <property type="term" value="C:nucleus"/>
    <property type="evidence" value="ECO:0000314"/>
    <property type="project" value="AgBase"/>
</dbReference>
<dbReference type="GO" id="GO:0005667">
    <property type="term" value="C:transcription regulator complex"/>
    <property type="evidence" value="ECO:0000315"/>
    <property type="project" value="AgBase"/>
</dbReference>
<dbReference type="GO" id="GO:0000981">
    <property type="term" value="F:DNA-binding transcription factor activity, RNA polymerase II-specific"/>
    <property type="evidence" value="ECO:0000318"/>
    <property type="project" value="GO_Central"/>
</dbReference>
<dbReference type="GO" id="GO:0140297">
    <property type="term" value="F:DNA-binding transcription factor binding"/>
    <property type="evidence" value="ECO:0000315"/>
    <property type="project" value="AgBase"/>
</dbReference>
<dbReference type="GO" id="GO:0019904">
    <property type="term" value="F:protein domain specific binding"/>
    <property type="evidence" value="ECO:0000314"/>
    <property type="project" value="AgBase"/>
</dbReference>
<dbReference type="GO" id="GO:0042803">
    <property type="term" value="F:protein homodimerization activity"/>
    <property type="evidence" value="ECO:0000315"/>
    <property type="project" value="AgBase"/>
</dbReference>
<dbReference type="GO" id="GO:0000978">
    <property type="term" value="F:RNA polymerase II cis-regulatory region sequence-specific DNA binding"/>
    <property type="evidence" value="ECO:0000318"/>
    <property type="project" value="GO_Central"/>
</dbReference>
<dbReference type="GO" id="GO:0043565">
    <property type="term" value="F:sequence-specific DNA binding"/>
    <property type="evidence" value="ECO:0000315"/>
    <property type="project" value="AgBase"/>
</dbReference>
<dbReference type="GO" id="GO:0046332">
    <property type="term" value="F:SMAD binding"/>
    <property type="evidence" value="ECO:0000318"/>
    <property type="project" value="GO_Central"/>
</dbReference>
<dbReference type="GO" id="GO:0030514">
    <property type="term" value="P:negative regulation of BMP signaling pathway"/>
    <property type="evidence" value="ECO:0000318"/>
    <property type="project" value="GO_Central"/>
</dbReference>
<dbReference type="GO" id="GO:0000122">
    <property type="term" value="P:negative regulation of transcription by RNA polymerase II"/>
    <property type="evidence" value="ECO:0000318"/>
    <property type="project" value="GO_Central"/>
</dbReference>
<dbReference type="GO" id="GO:0030512">
    <property type="term" value="P:negative regulation of transforming growth factor beta receptor signaling pathway"/>
    <property type="evidence" value="ECO:0000250"/>
    <property type="project" value="UniProtKB"/>
</dbReference>
<dbReference type="CDD" id="cd21083">
    <property type="entry name" value="DHD_Ski"/>
    <property type="match status" value="1"/>
</dbReference>
<dbReference type="FunFam" id="3.10.390.10:FF:000002">
    <property type="entry name" value="Putative ski oncogene"/>
    <property type="match status" value="1"/>
</dbReference>
<dbReference type="FunFam" id="3.10.260.20:FF:000002">
    <property type="entry name" value="SKI-like oncogene a"/>
    <property type="match status" value="1"/>
</dbReference>
<dbReference type="Gene3D" id="3.10.390.10">
    <property type="entry name" value="SAND domain-like"/>
    <property type="match status" value="1"/>
</dbReference>
<dbReference type="Gene3D" id="3.10.260.20">
    <property type="entry name" value="Ski"/>
    <property type="match status" value="1"/>
</dbReference>
<dbReference type="InterPro" id="IPR014890">
    <property type="entry name" value="c-SKI_SMAD4-bd_dom"/>
</dbReference>
<dbReference type="InterPro" id="IPR047315">
    <property type="entry name" value="DHD_Ski"/>
</dbReference>
<dbReference type="InterPro" id="IPR009061">
    <property type="entry name" value="DNA-bd_dom_put_sf"/>
</dbReference>
<dbReference type="InterPro" id="IPR010919">
    <property type="entry name" value="SAND-like_dom_sf"/>
</dbReference>
<dbReference type="InterPro" id="IPR003380">
    <property type="entry name" value="SKI/SNO/DAC"/>
</dbReference>
<dbReference type="InterPro" id="IPR037000">
    <property type="entry name" value="Ski_DNA-bd_sf"/>
</dbReference>
<dbReference type="InterPro" id="IPR023216">
    <property type="entry name" value="Tscrpt_reg_SKI_SnoN"/>
</dbReference>
<dbReference type="PANTHER" id="PTHR10005:SF15">
    <property type="entry name" value="SKI ONCOGENE"/>
    <property type="match status" value="1"/>
</dbReference>
<dbReference type="PANTHER" id="PTHR10005">
    <property type="entry name" value="SKI ONCOGENE-RELATED"/>
    <property type="match status" value="1"/>
</dbReference>
<dbReference type="Pfam" id="PF08782">
    <property type="entry name" value="c-SKI_SMAD_bind"/>
    <property type="match status" value="1"/>
</dbReference>
<dbReference type="Pfam" id="PF02437">
    <property type="entry name" value="Ski_Sno_DHD"/>
    <property type="match status" value="1"/>
</dbReference>
<dbReference type="SMART" id="SM01046">
    <property type="entry name" value="c-SKI_SMAD_bind"/>
    <property type="match status" value="1"/>
</dbReference>
<dbReference type="SUPFAM" id="SSF46955">
    <property type="entry name" value="Putative DNA-binding domain"/>
    <property type="match status" value="1"/>
</dbReference>
<dbReference type="SUPFAM" id="SSF63763">
    <property type="entry name" value="SAND domain-like"/>
    <property type="match status" value="1"/>
</dbReference>